<gene>
    <name type="ordered locus">SAV0495</name>
</gene>
<sequence length="282" mass="31442">MIYETAPAKINFTLDTLFKRNDGYHEIEMIMTTVDLNDRLTFHKRKDRKIVVEIEHNYVPSNHKNLAYRAAQLFIEQYQLKQGVTISIDKEIPVSAGLAGGSADAAATLRGLNRLFDIGASLEELALLGSKIGTDIPFCIYNKTALCTGRGEKIEFLNKPPSAWVILAKPNLGISSPDIFKLINLDKRYDVHTKMCYEALENRDYQQLCQSLSNRLEPISVSKHPQIDKLKNNMLKSGADGALMSGSGPTVYGLARKESQAKNIYNAVNGCCNEVYLVRLLG</sequence>
<protein>
    <recommendedName>
        <fullName evidence="1">Putative 4-diphosphocytidyl-2-C-methyl-D-erythritol kinase</fullName>
        <shortName evidence="1">CMK</shortName>
        <ecNumber evidence="1">2.7.1.148</ecNumber>
    </recommendedName>
    <alternativeName>
        <fullName evidence="1">4-(cytidine-5'-diphospho)-2-C-methyl-D-erythritol kinase</fullName>
    </alternativeName>
</protein>
<comment type="function">
    <text evidence="1">Catalyzes the phosphorylation of the position 2 hydroxy group of 4-diphosphocytidyl-2C-methyl-D-erythritol.</text>
</comment>
<comment type="catalytic activity">
    <reaction evidence="1">
        <text>4-CDP-2-C-methyl-D-erythritol + ATP = 4-CDP-2-C-methyl-D-erythritol 2-phosphate + ADP + H(+)</text>
        <dbReference type="Rhea" id="RHEA:18437"/>
        <dbReference type="ChEBI" id="CHEBI:15378"/>
        <dbReference type="ChEBI" id="CHEBI:30616"/>
        <dbReference type="ChEBI" id="CHEBI:57823"/>
        <dbReference type="ChEBI" id="CHEBI:57919"/>
        <dbReference type="ChEBI" id="CHEBI:456216"/>
        <dbReference type="EC" id="2.7.1.148"/>
    </reaction>
</comment>
<comment type="similarity">
    <text evidence="1">Belongs to the GHMP kinase family. IspE subfamily.</text>
</comment>
<organism>
    <name type="scientific">Staphylococcus aureus (strain Mu50 / ATCC 700699)</name>
    <dbReference type="NCBI Taxonomy" id="158878"/>
    <lineage>
        <taxon>Bacteria</taxon>
        <taxon>Bacillati</taxon>
        <taxon>Bacillota</taxon>
        <taxon>Bacilli</taxon>
        <taxon>Bacillales</taxon>
        <taxon>Staphylococcaceae</taxon>
        <taxon>Staphylococcus</taxon>
    </lineage>
</organism>
<feature type="chain" id="PRO_0000189262" description="Putative 4-diphosphocytidyl-2-C-methyl-D-erythritol kinase">
    <location>
        <begin position="1"/>
        <end position="282"/>
    </location>
</feature>
<feature type="active site" evidence="1">
    <location>
        <position position="9"/>
    </location>
</feature>
<feature type="active site" evidence="1">
    <location>
        <position position="135"/>
    </location>
</feature>
<feature type="binding site" evidence="1">
    <location>
        <begin position="93"/>
        <end position="103"/>
    </location>
    <ligand>
        <name>ATP</name>
        <dbReference type="ChEBI" id="CHEBI:30616"/>
    </ligand>
</feature>
<proteinExistence type="inferred from homology"/>
<keyword id="KW-0067">ATP-binding</keyword>
<keyword id="KW-0418">Kinase</keyword>
<keyword id="KW-0547">Nucleotide-binding</keyword>
<keyword id="KW-0808">Transferase</keyword>
<dbReference type="EC" id="2.7.1.148" evidence="1"/>
<dbReference type="EMBL" id="BA000017">
    <property type="protein sequence ID" value="BAB56657.1"/>
    <property type="molecule type" value="Genomic_DNA"/>
</dbReference>
<dbReference type="SMR" id="P65180"/>
<dbReference type="KEGG" id="sav:SAV0495"/>
<dbReference type="HOGENOM" id="CLU_053057_1_1_9"/>
<dbReference type="PhylomeDB" id="P65180"/>
<dbReference type="Proteomes" id="UP000002481">
    <property type="component" value="Chromosome"/>
</dbReference>
<dbReference type="GO" id="GO:0050515">
    <property type="term" value="F:4-(cytidine 5'-diphospho)-2-C-methyl-D-erythritol kinase activity"/>
    <property type="evidence" value="ECO:0007669"/>
    <property type="project" value="UniProtKB-UniRule"/>
</dbReference>
<dbReference type="GO" id="GO:0005524">
    <property type="term" value="F:ATP binding"/>
    <property type="evidence" value="ECO:0007669"/>
    <property type="project" value="UniProtKB-UniRule"/>
</dbReference>
<dbReference type="GO" id="GO:0016114">
    <property type="term" value="P:terpenoid biosynthetic process"/>
    <property type="evidence" value="ECO:0007669"/>
    <property type="project" value="InterPro"/>
</dbReference>
<dbReference type="FunFam" id="3.30.230.10:FF:000029">
    <property type="entry name" value="4-diphosphocytidyl-2-C-methyl-D-erythritol kinase"/>
    <property type="match status" value="1"/>
</dbReference>
<dbReference type="FunFam" id="3.30.70.890:FF:000006">
    <property type="entry name" value="4-diphosphocytidyl-2-C-methyl-D-erythritol kinase"/>
    <property type="match status" value="1"/>
</dbReference>
<dbReference type="Gene3D" id="3.30.230.10">
    <property type="match status" value="1"/>
</dbReference>
<dbReference type="Gene3D" id="3.30.70.890">
    <property type="entry name" value="GHMP kinase, C-terminal domain"/>
    <property type="match status" value="1"/>
</dbReference>
<dbReference type="HAMAP" id="MF_00061">
    <property type="entry name" value="IspE"/>
    <property type="match status" value="1"/>
</dbReference>
<dbReference type="InterPro" id="IPR013750">
    <property type="entry name" value="GHMP_kinase_C_dom"/>
</dbReference>
<dbReference type="InterPro" id="IPR036554">
    <property type="entry name" value="GHMP_kinase_C_sf"/>
</dbReference>
<dbReference type="InterPro" id="IPR006204">
    <property type="entry name" value="GHMP_kinase_N_dom"/>
</dbReference>
<dbReference type="InterPro" id="IPR004424">
    <property type="entry name" value="IspE"/>
</dbReference>
<dbReference type="InterPro" id="IPR020568">
    <property type="entry name" value="Ribosomal_Su5_D2-typ_SF"/>
</dbReference>
<dbReference type="InterPro" id="IPR014721">
    <property type="entry name" value="Ribsml_uS5_D2-typ_fold_subgr"/>
</dbReference>
<dbReference type="NCBIfam" id="TIGR00154">
    <property type="entry name" value="ispE"/>
    <property type="match status" value="1"/>
</dbReference>
<dbReference type="PANTHER" id="PTHR43527">
    <property type="entry name" value="4-DIPHOSPHOCYTIDYL-2-C-METHYL-D-ERYTHRITOL KINASE, CHLOROPLASTIC"/>
    <property type="match status" value="1"/>
</dbReference>
<dbReference type="PANTHER" id="PTHR43527:SF2">
    <property type="entry name" value="4-DIPHOSPHOCYTIDYL-2-C-METHYL-D-ERYTHRITOL KINASE, CHLOROPLASTIC"/>
    <property type="match status" value="1"/>
</dbReference>
<dbReference type="Pfam" id="PF08544">
    <property type="entry name" value="GHMP_kinases_C"/>
    <property type="match status" value="1"/>
</dbReference>
<dbReference type="Pfam" id="PF00288">
    <property type="entry name" value="GHMP_kinases_N"/>
    <property type="match status" value="1"/>
</dbReference>
<dbReference type="PIRSF" id="PIRSF010376">
    <property type="entry name" value="IspE"/>
    <property type="match status" value="1"/>
</dbReference>
<dbReference type="SUPFAM" id="SSF55060">
    <property type="entry name" value="GHMP Kinase, C-terminal domain"/>
    <property type="match status" value="1"/>
</dbReference>
<dbReference type="SUPFAM" id="SSF54211">
    <property type="entry name" value="Ribosomal protein S5 domain 2-like"/>
    <property type="match status" value="1"/>
</dbReference>
<name>ISPE_STAAM</name>
<accession>P65180</accession>
<accession>Q99WA8</accession>
<evidence type="ECO:0000255" key="1">
    <source>
        <dbReference type="HAMAP-Rule" id="MF_00061"/>
    </source>
</evidence>
<reference key="1">
    <citation type="journal article" date="2001" name="Lancet">
        <title>Whole genome sequencing of meticillin-resistant Staphylococcus aureus.</title>
        <authorList>
            <person name="Kuroda M."/>
            <person name="Ohta T."/>
            <person name="Uchiyama I."/>
            <person name="Baba T."/>
            <person name="Yuzawa H."/>
            <person name="Kobayashi I."/>
            <person name="Cui L."/>
            <person name="Oguchi A."/>
            <person name="Aoki K."/>
            <person name="Nagai Y."/>
            <person name="Lian J.-Q."/>
            <person name="Ito T."/>
            <person name="Kanamori M."/>
            <person name="Matsumaru H."/>
            <person name="Maruyama A."/>
            <person name="Murakami H."/>
            <person name="Hosoyama A."/>
            <person name="Mizutani-Ui Y."/>
            <person name="Takahashi N.K."/>
            <person name="Sawano T."/>
            <person name="Inoue R."/>
            <person name="Kaito C."/>
            <person name="Sekimizu K."/>
            <person name="Hirakawa H."/>
            <person name="Kuhara S."/>
            <person name="Goto S."/>
            <person name="Yabuzaki J."/>
            <person name="Kanehisa M."/>
            <person name="Yamashita A."/>
            <person name="Oshima K."/>
            <person name="Furuya K."/>
            <person name="Yoshino C."/>
            <person name="Shiba T."/>
            <person name="Hattori M."/>
            <person name="Ogasawara N."/>
            <person name="Hayashi H."/>
            <person name="Hiramatsu K."/>
        </authorList>
    </citation>
    <scope>NUCLEOTIDE SEQUENCE [LARGE SCALE GENOMIC DNA]</scope>
    <source>
        <strain>Mu50 / ATCC 700699</strain>
    </source>
</reference>